<proteinExistence type="inferred from homology"/>
<keyword id="KW-1003">Cell membrane</keyword>
<keyword id="KW-0285">Flavoprotein</keyword>
<keyword id="KW-0288">FMN</keyword>
<keyword id="KW-0472">Membrane</keyword>
<keyword id="KW-0560">Oxidoreductase</keyword>
<keyword id="KW-0665">Pyrimidine biosynthesis</keyword>
<keyword id="KW-1185">Reference proteome</keyword>
<accession>A6VP48</accession>
<evidence type="ECO:0000255" key="1">
    <source>
        <dbReference type="HAMAP-Rule" id="MF_00225"/>
    </source>
</evidence>
<comment type="function">
    <text evidence="1">Catalyzes the conversion of dihydroorotate to orotate with quinone as electron acceptor.</text>
</comment>
<comment type="catalytic activity">
    <reaction evidence="1">
        <text>(S)-dihydroorotate + a quinone = orotate + a quinol</text>
        <dbReference type="Rhea" id="RHEA:30187"/>
        <dbReference type="ChEBI" id="CHEBI:24646"/>
        <dbReference type="ChEBI" id="CHEBI:30839"/>
        <dbReference type="ChEBI" id="CHEBI:30864"/>
        <dbReference type="ChEBI" id="CHEBI:132124"/>
        <dbReference type="EC" id="1.3.5.2"/>
    </reaction>
</comment>
<comment type="cofactor">
    <cofactor evidence="1">
        <name>FMN</name>
        <dbReference type="ChEBI" id="CHEBI:58210"/>
    </cofactor>
    <text evidence="1">Binds 1 FMN per subunit.</text>
</comment>
<comment type="pathway">
    <text evidence="1">Pyrimidine metabolism; UMP biosynthesis via de novo pathway; orotate from (S)-dihydroorotate (quinone route): step 1/1.</text>
</comment>
<comment type="subunit">
    <text evidence="1">Monomer.</text>
</comment>
<comment type="subcellular location">
    <subcellularLocation>
        <location evidence="1">Cell membrane</location>
        <topology evidence="1">Peripheral membrane protein</topology>
    </subcellularLocation>
</comment>
<comment type="similarity">
    <text evidence="1">Belongs to the dihydroorotate dehydrogenase family. Type 2 subfamily.</text>
</comment>
<dbReference type="EC" id="1.3.5.2" evidence="1"/>
<dbReference type="EMBL" id="CP000746">
    <property type="protein sequence ID" value="ABR74745.1"/>
    <property type="molecule type" value="Genomic_DNA"/>
</dbReference>
<dbReference type="RefSeq" id="WP_012073122.1">
    <property type="nucleotide sequence ID" value="NC_009655.1"/>
</dbReference>
<dbReference type="SMR" id="A6VP48"/>
<dbReference type="STRING" id="339671.Asuc_1385"/>
<dbReference type="KEGG" id="asu:Asuc_1385"/>
<dbReference type="eggNOG" id="COG0167">
    <property type="taxonomic scope" value="Bacteria"/>
</dbReference>
<dbReference type="HOGENOM" id="CLU_013640_2_0_6"/>
<dbReference type="OrthoDB" id="9802377at2"/>
<dbReference type="UniPathway" id="UPA00070">
    <property type="reaction ID" value="UER00946"/>
</dbReference>
<dbReference type="Proteomes" id="UP000001114">
    <property type="component" value="Chromosome"/>
</dbReference>
<dbReference type="GO" id="GO:0005737">
    <property type="term" value="C:cytoplasm"/>
    <property type="evidence" value="ECO:0007669"/>
    <property type="project" value="InterPro"/>
</dbReference>
<dbReference type="GO" id="GO:0005886">
    <property type="term" value="C:plasma membrane"/>
    <property type="evidence" value="ECO:0007669"/>
    <property type="project" value="UniProtKB-SubCell"/>
</dbReference>
<dbReference type="GO" id="GO:0106430">
    <property type="term" value="F:dihydroorotate dehydrogenase (quinone) activity"/>
    <property type="evidence" value="ECO:0007669"/>
    <property type="project" value="UniProtKB-EC"/>
</dbReference>
<dbReference type="GO" id="GO:0006207">
    <property type="term" value="P:'de novo' pyrimidine nucleobase biosynthetic process"/>
    <property type="evidence" value="ECO:0007669"/>
    <property type="project" value="InterPro"/>
</dbReference>
<dbReference type="GO" id="GO:0044205">
    <property type="term" value="P:'de novo' UMP biosynthetic process"/>
    <property type="evidence" value="ECO:0007669"/>
    <property type="project" value="UniProtKB-UniRule"/>
</dbReference>
<dbReference type="CDD" id="cd04738">
    <property type="entry name" value="DHOD_2_like"/>
    <property type="match status" value="1"/>
</dbReference>
<dbReference type="FunFam" id="3.20.20.70:FF:000028">
    <property type="entry name" value="Dihydroorotate dehydrogenase (quinone)"/>
    <property type="match status" value="1"/>
</dbReference>
<dbReference type="Gene3D" id="3.20.20.70">
    <property type="entry name" value="Aldolase class I"/>
    <property type="match status" value="1"/>
</dbReference>
<dbReference type="HAMAP" id="MF_00225">
    <property type="entry name" value="DHO_dh_type2"/>
    <property type="match status" value="1"/>
</dbReference>
<dbReference type="InterPro" id="IPR013785">
    <property type="entry name" value="Aldolase_TIM"/>
</dbReference>
<dbReference type="InterPro" id="IPR050074">
    <property type="entry name" value="DHO_dehydrogenase"/>
</dbReference>
<dbReference type="InterPro" id="IPR012135">
    <property type="entry name" value="Dihydroorotate_DH_1_2"/>
</dbReference>
<dbReference type="InterPro" id="IPR005719">
    <property type="entry name" value="Dihydroorotate_DH_2"/>
</dbReference>
<dbReference type="InterPro" id="IPR005720">
    <property type="entry name" value="Dihydroorotate_DH_cat"/>
</dbReference>
<dbReference type="InterPro" id="IPR001295">
    <property type="entry name" value="Dihydroorotate_DH_CS"/>
</dbReference>
<dbReference type="NCBIfam" id="NF003644">
    <property type="entry name" value="PRK05286.1-1"/>
    <property type="match status" value="1"/>
</dbReference>
<dbReference type="NCBIfam" id="NF003645">
    <property type="entry name" value="PRK05286.1-2"/>
    <property type="match status" value="1"/>
</dbReference>
<dbReference type="NCBIfam" id="NF003646">
    <property type="entry name" value="PRK05286.1-4"/>
    <property type="match status" value="1"/>
</dbReference>
<dbReference type="NCBIfam" id="NF003652">
    <property type="entry name" value="PRK05286.2-5"/>
    <property type="match status" value="1"/>
</dbReference>
<dbReference type="NCBIfam" id="TIGR01036">
    <property type="entry name" value="pyrD_sub2"/>
    <property type="match status" value="1"/>
</dbReference>
<dbReference type="PANTHER" id="PTHR48109:SF4">
    <property type="entry name" value="DIHYDROOROTATE DEHYDROGENASE (QUINONE), MITOCHONDRIAL"/>
    <property type="match status" value="1"/>
</dbReference>
<dbReference type="PANTHER" id="PTHR48109">
    <property type="entry name" value="DIHYDROOROTATE DEHYDROGENASE (QUINONE), MITOCHONDRIAL-RELATED"/>
    <property type="match status" value="1"/>
</dbReference>
<dbReference type="Pfam" id="PF01180">
    <property type="entry name" value="DHO_dh"/>
    <property type="match status" value="1"/>
</dbReference>
<dbReference type="PIRSF" id="PIRSF000164">
    <property type="entry name" value="DHO_oxidase"/>
    <property type="match status" value="1"/>
</dbReference>
<dbReference type="SUPFAM" id="SSF51395">
    <property type="entry name" value="FMN-linked oxidoreductases"/>
    <property type="match status" value="1"/>
</dbReference>
<dbReference type="PROSITE" id="PS00911">
    <property type="entry name" value="DHODEHASE_1"/>
    <property type="match status" value="1"/>
</dbReference>
<dbReference type="PROSITE" id="PS00912">
    <property type="entry name" value="DHODEHASE_2"/>
    <property type="match status" value="1"/>
</dbReference>
<gene>
    <name evidence="1" type="primary">pyrD</name>
    <name type="ordered locus">Asuc_1385</name>
</gene>
<feature type="chain" id="PRO_1000071764" description="Dihydroorotate dehydrogenase (quinone)">
    <location>
        <begin position="1"/>
        <end position="340"/>
    </location>
</feature>
<feature type="active site" description="Nucleophile" evidence="1">
    <location>
        <position position="178"/>
    </location>
</feature>
<feature type="binding site" evidence="1">
    <location>
        <begin position="65"/>
        <end position="69"/>
    </location>
    <ligand>
        <name>FMN</name>
        <dbReference type="ChEBI" id="CHEBI:58210"/>
    </ligand>
</feature>
<feature type="binding site" evidence="1">
    <location>
        <position position="69"/>
    </location>
    <ligand>
        <name>substrate</name>
    </ligand>
</feature>
<feature type="binding site" evidence="1">
    <location>
        <position position="89"/>
    </location>
    <ligand>
        <name>FMN</name>
        <dbReference type="ChEBI" id="CHEBI:58210"/>
    </ligand>
</feature>
<feature type="binding site" evidence="1">
    <location>
        <begin position="114"/>
        <end position="118"/>
    </location>
    <ligand>
        <name>substrate</name>
    </ligand>
</feature>
<feature type="binding site" evidence="1">
    <location>
        <position position="142"/>
    </location>
    <ligand>
        <name>FMN</name>
        <dbReference type="ChEBI" id="CHEBI:58210"/>
    </ligand>
</feature>
<feature type="binding site" evidence="1">
    <location>
        <position position="175"/>
    </location>
    <ligand>
        <name>FMN</name>
        <dbReference type="ChEBI" id="CHEBI:58210"/>
    </ligand>
</feature>
<feature type="binding site" evidence="1">
    <location>
        <position position="175"/>
    </location>
    <ligand>
        <name>substrate</name>
    </ligand>
</feature>
<feature type="binding site" evidence="1">
    <location>
        <position position="180"/>
    </location>
    <ligand>
        <name>substrate</name>
    </ligand>
</feature>
<feature type="binding site" evidence="1">
    <location>
        <position position="220"/>
    </location>
    <ligand>
        <name>FMN</name>
        <dbReference type="ChEBI" id="CHEBI:58210"/>
    </ligand>
</feature>
<feature type="binding site" evidence="1">
    <location>
        <position position="248"/>
    </location>
    <ligand>
        <name>FMN</name>
        <dbReference type="ChEBI" id="CHEBI:58210"/>
    </ligand>
</feature>
<feature type="binding site" evidence="1">
    <location>
        <begin position="249"/>
        <end position="250"/>
    </location>
    <ligand>
        <name>substrate</name>
    </ligand>
</feature>
<feature type="binding site" evidence="1">
    <location>
        <position position="271"/>
    </location>
    <ligand>
        <name>FMN</name>
        <dbReference type="ChEBI" id="CHEBI:58210"/>
    </ligand>
</feature>
<feature type="binding site" evidence="1">
    <location>
        <position position="300"/>
    </location>
    <ligand>
        <name>FMN</name>
        <dbReference type="ChEBI" id="CHEBI:58210"/>
    </ligand>
</feature>
<feature type="binding site" evidence="1">
    <location>
        <begin position="321"/>
        <end position="322"/>
    </location>
    <ligand>
        <name>FMN</name>
        <dbReference type="ChEBI" id="CHEBI:58210"/>
    </ligand>
</feature>
<reference key="1">
    <citation type="journal article" date="2010" name="BMC Genomics">
        <title>A genomic perspective on the potential of Actinobacillus succinogenes for industrial succinate production.</title>
        <authorList>
            <person name="McKinlay J.B."/>
            <person name="Laivenieks M."/>
            <person name="Schindler B.D."/>
            <person name="McKinlay A.A."/>
            <person name="Siddaramappa S."/>
            <person name="Challacombe J.F."/>
            <person name="Lowry S.R."/>
            <person name="Clum A."/>
            <person name="Lapidus A.L."/>
            <person name="Burkhart K.B."/>
            <person name="Harkins V."/>
            <person name="Vieille C."/>
        </authorList>
    </citation>
    <scope>NUCLEOTIDE SEQUENCE [LARGE SCALE GENOMIC DNA]</scope>
    <source>
        <strain>ATCC 55618 / DSM 22257 / CCUG 43843 / 130Z</strain>
    </source>
</reference>
<organism>
    <name type="scientific">Actinobacillus succinogenes (strain ATCC 55618 / DSM 22257 / CCUG 43843 / 130Z)</name>
    <dbReference type="NCBI Taxonomy" id="339671"/>
    <lineage>
        <taxon>Bacteria</taxon>
        <taxon>Pseudomonadati</taxon>
        <taxon>Pseudomonadota</taxon>
        <taxon>Gammaproteobacteria</taxon>
        <taxon>Pasteurellales</taxon>
        <taxon>Pasteurellaceae</taxon>
        <taxon>Actinobacillus</taxon>
    </lineage>
</organism>
<protein>
    <recommendedName>
        <fullName evidence="1">Dihydroorotate dehydrogenase (quinone)</fullName>
        <ecNumber evidence="1">1.3.5.2</ecNumber>
    </recommendedName>
    <alternativeName>
        <fullName evidence="1">DHOdehase</fullName>
        <shortName evidence="1">DHOD</shortName>
        <shortName evidence="1">DHODase</shortName>
    </alternativeName>
    <alternativeName>
        <fullName evidence="1">Dihydroorotate oxidase</fullName>
    </alternativeName>
</protein>
<sequence length="340" mass="37055">MLYPLIRKGIFALEPETAHNLAIKALHIAGNPWLNRALKALLGCPQGTEKTVMGIKFKNPIGLAAGADKNGEAIDGFGAMGFGFIEVGTVTPLAQDGNAKPRQFRIVEAEGIINRNGFNNYGIDHLIENVNKSHYDGTLGINIGKNKITPIEQGKDDYIFCLNKAYNYAHYITVNISSPNTPDLRTLQYGDALDDLLKSIKERQKILAEQYNKYVPIALKIAPDLTEAELVQIADTVRRHQMDGVIATNTTISRDTVQGMKNAAEIGGLSGKPLQHKSTEIIRRLHRELKGDIPIIGSGGIDGVQNAQEKIAAGAELLQIYSGLIYHGPALVKTLVQTIK</sequence>
<name>PYRD_ACTSZ</name>